<keyword id="KW-1185">Reference proteome</keyword>
<name>Y065_AFV1Y</name>
<accession>Q70LD3</accession>
<protein>
    <recommendedName>
        <fullName>Uncharacterized protein ORF65</fullName>
    </recommendedName>
</protein>
<sequence length="65" mass="7556">METVTVLRKKGKTYLIVSVNGFLTVTDCKSLNKLQKELLRQAYRKTKNEEEKALINVCLQSRLNR</sequence>
<reference key="1">
    <citation type="journal article" date="2003" name="Virology">
        <title>AFV1, a novel virus infecting hyperthermophilic archaea of the genus acidianus.</title>
        <authorList>
            <person name="Bettstetter M."/>
            <person name="Peng X."/>
            <person name="Garrett R.A."/>
            <person name="Prangishvili D."/>
        </authorList>
    </citation>
    <scope>NUCLEOTIDE SEQUENCE [GENOMIC DNA]</scope>
</reference>
<gene>
    <name type="ORF">ORF65</name>
</gene>
<dbReference type="EMBL" id="AJ567472">
    <property type="protein sequence ID" value="CAD98947.1"/>
    <property type="molecule type" value="Genomic_DNA"/>
</dbReference>
<dbReference type="RefSeq" id="YP_003743.1">
    <property type="nucleotide sequence ID" value="NC_005830.1"/>
</dbReference>
<dbReference type="SMR" id="Q70LD3"/>
<dbReference type="KEGG" id="vg:2769163"/>
<dbReference type="Proteomes" id="UP000000514">
    <property type="component" value="Genome"/>
</dbReference>
<feature type="chain" id="PRO_0000384542" description="Uncharacterized protein ORF65">
    <location>
        <begin position="1"/>
        <end position="65"/>
    </location>
</feature>
<organism>
    <name type="scientific">Acidianus filamentous virus 1 (isolate United States/Yellowstone)</name>
    <name type="common">AFV-1</name>
    <dbReference type="NCBI Taxonomy" id="654909"/>
    <lineage>
        <taxon>Viruses</taxon>
        <taxon>Adnaviria</taxon>
        <taxon>Zilligvirae</taxon>
        <taxon>Taleaviricota</taxon>
        <taxon>Tokiviricetes</taxon>
        <taxon>Ligamenvirales</taxon>
        <taxon>Ungulaviridae</taxon>
        <taxon>Captovirus</taxon>
        <taxon>Acidianus filamentous virus 1</taxon>
    </lineage>
</organism>
<organismHost>
    <name type="scientific">Acidianus hospitalis</name>
    <dbReference type="NCBI Taxonomy" id="563177"/>
</organismHost>
<organismHost>
    <name type="scientific">Acidianus infernus</name>
    <dbReference type="NCBI Taxonomy" id="12915"/>
</organismHost>
<proteinExistence type="predicted"/>